<evidence type="ECO:0000269" key="1">
    <source>
    </source>
</evidence>
<evidence type="ECO:0000305" key="2"/>
<sequence length="270" mass="30652">MAFSRTHSLLARAGSTSTYKRVWRYWYPLMTRGLGNDEIVFINWAYEEDPPMDLPLEASDEPNRAHINLYHRTATQVDLGGKQVLEVSCGHGGGASYLTRTLHPASYTGLDLNQAGIKLCKKRHRLPGLDFVRGDAENLPFDDESFDVVLNVEASHCYPHFRRFLAEVVRVLRPGGYFPYADLRPNNEIAAWEADLAATPLRQLSQRQINAEVLRGIGNNSQKSRDLVDRHLPAFLRFAGREFIGVQGTQLSRYLEGGELSYRMYCFTKD</sequence>
<dbReference type="EC" id="2.1.1.-"/>
<dbReference type="EMBL" id="U00024">
    <property type="protein sequence ID" value="AAA50934.1"/>
    <property type="molecule type" value="Genomic_DNA"/>
</dbReference>
<dbReference type="EMBL" id="AL123456">
    <property type="protein sequence ID" value="CCP45756.1"/>
    <property type="molecule type" value="Genomic_DNA"/>
</dbReference>
<dbReference type="PIR" id="E70669">
    <property type="entry name" value="E70669"/>
</dbReference>
<dbReference type="RefSeq" id="NP_217468.1">
    <property type="nucleotide sequence ID" value="NC_000962.3"/>
</dbReference>
<dbReference type="RefSeq" id="WP_003414900.1">
    <property type="nucleotide sequence ID" value="NZ_NVQJ01000015.1"/>
</dbReference>
<dbReference type="SMR" id="P9WIN3"/>
<dbReference type="FunCoup" id="P9WIN3">
    <property type="interactions" value="1"/>
</dbReference>
<dbReference type="STRING" id="83332.Rv2952"/>
<dbReference type="PaxDb" id="83332-Rv2952"/>
<dbReference type="DNASU" id="887311"/>
<dbReference type="GeneID" id="887311"/>
<dbReference type="KEGG" id="mtu:Rv2952"/>
<dbReference type="KEGG" id="mtv:RVBD_2952"/>
<dbReference type="TubercuList" id="Rv2952"/>
<dbReference type="eggNOG" id="COG2226">
    <property type="taxonomic scope" value="Bacteria"/>
</dbReference>
<dbReference type="InParanoid" id="P9WIN3"/>
<dbReference type="OrthoDB" id="9769602at2"/>
<dbReference type="PhylomeDB" id="P9WIN3"/>
<dbReference type="BioCyc" id="MetaCyc:G185E-7206-MONOMER"/>
<dbReference type="Proteomes" id="UP000001584">
    <property type="component" value="Chromosome"/>
</dbReference>
<dbReference type="GO" id="GO:0005886">
    <property type="term" value="C:plasma membrane"/>
    <property type="evidence" value="ECO:0007005"/>
    <property type="project" value="MTBBASE"/>
</dbReference>
<dbReference type="GO" id="GO:0008168">
    <property type="term" value="F:methyltransferase activity"/>
    <property type="evidence" value="ECO:0000318"/>
    <property type="project" value="GO_Central"/>
</dbReference>
<dbReference type="GO" id="GO:0008171">
    <property type="term" value="F:O-methyltransferase activity"/>
    <property type="evidence" value="ECO:0000314"/>
    <property type="project" value="MTBBASE"/>
</dbReference>
<dbReference type="GO" id="GO:0008757">
    <property type="term" value="F:S-adenosylmethionine-dependent methyltransferase activity"/>
    <property type="evidence" value="ECO:0007669"/>
    <property type="project" value="InterPro"/>
</dbReference>
<dbReference type="GO" id="GO:0071770">
    <property type="term" value="P:DIM/DIP cell wall layer assembly"/>
    <property type="evidence" value="ECO:0000314"/>
    <property type="project" value="MTBBASE"/>
</dbReference>
<dbReference type="GO" id="GO:0006629">
    <property type="term" value="P:lipid metabolic process"/>
    <property type="evidence" value="ECO:0007669"/>
    <property type="project" value="UniProtKB-KW"/>
</dbReference>
<dbReference type="GO" id="GO:0032259">
    <property type="term" value="P:methylation"/>
    <property type="evidence" value="ECO:0007669"/>
    <property type="project" value="UniProtKB-KW"/>
</dbReference>
<dbReference type="CDD" id="cd02440">
    <property type="entry name" value="AdoMet_MTases"/>
    <property type="match status" value="1"/>
</dbReference>
<dbReference type="FunFam" id="3.40.50.150:FF:000444">
    <property type="entry name" value="Phthiotriol/phenolphthiotriol dimycocerosates methyltransferase"/>
    <property type="match status" value="1"/>
</dbReference>
<dbReference type="Gene3D" id="3.40.50.150">
    <property type="entry name" value="Vaccinia Virus protein VP39"/>
    <property type="match status" value="1"/>
</dbReference>
<dbReference type="InterPro" id="IPR013216">
    <property type="entry name" value="Methyltransf_11"/>
</dbReference>
<dbReference type="InterPro" id="IPR050508">
    <property type="entry name" value="Methyltransf_Superfamily"/>
</dbReference>
<dbReference type="InterPro" id="IPR054877">
    <property type="entry name" value="PthPhpthDimycoMt"/>
</dbReference>
<dbReference type="InterPro" id="IPR029063">
    <property type="entry name" value="SAM-dependent_MTases_sf"/>
</dbReference>
<dbReference type="NCBIfam" id="NF045823">
    <property type="entry name" value="PthPhpthDimycoMt"/>
    <property type="match status" value="1"/>
</dbReference>
<dbReference type="PANTHER" id="PTHR42912">
    <property type="entry name" value="METHYLTRANSFERASE"/>
    <property type="match status" value="1"/>
</dbReference>
<dbReference type="PANTHER" id="PTHR42912:SF93">
    <property type="entry name" value="N6-ADENOSINE-METHYLTRANSFERASE TMT1A"/>
    <property type="match status" value="1"/>
</dbReference>
<dbReference type="Pfam" id="PF08241">
    <property type="entry name" value="Methyltransf_11"/>
    <property type="match status" value="1"/>
</dbReference>
<dbReference type="SUPFAM" id="SSF53335">
    <property type="entry name" value="S-adenosyl-L-methionine-dependent methyltransferases"/>
    <property type="match status" value="1"/>
</dbReference>
<organism>
    <name type="scientific">Mycobacterium tuberculosis (strain ATCC 25618 / H37Rv)</name>
    <dbReference type="NCBI Taxonomy" id="83332"/>
    <lineage>
        <taxon>Bacteria</taxon>
        <taxon>Bacillati</taxon>
        <taxon>Actinomycetota</taxon>
        <taxon>Actinomycetes</taxon>
        <taxon>Mycobacteriales</taxon>
        <taxon>Mycobacteriaceae</taxon>
        <taxon>Mycobacterium</taxon>
        <taxon>Mycobacterium tuberculosis complex</taxon>
    </lineage>
</organism>
<comment type="function">
    <text evidence="1">Catalyzes the methylation of the lipid moiety of the intermediate compounds phthiotriol and glycosylated phenolphthiotriol dimycoserosates to form phthiocerol dimycocerosates (DIM A) and glycosylated phenolphthiocerol dimycocerosates (PGL).</text>
</comment>
<comment type="miscellaneous">
    <text>Was identified as a high-confidence drug target.</text>
</comment>
<comment type="similarity">
    <text evidence="2">Belongs to the methyltransferase superfamily. Phthiotriol/phenolphthiotriol dimycocerosates methyltransferase family.</text>
</comment>
<reference key="1">
    <citation type="submission" date="1994-09" db="EMBL/GenBank/DDBJ databases">
        <authorList>
            <person name="Smith D.R."/>
            <person name="Robison K."/>
        </authorList>
    </citation>
    <scope>NUCLEOTIDE SEQUENCE [GENOMIC DNA]</scope>
</reference>
<reference key="2">
    <citation type="journal article" date="1998" name="Nature">
        <title>Deciphering the biology of Mycobacterium tuberculosis from the complete genome sequence.</title>
        <authorList>
            <person name="Cole S.T."/>
            <person name="Brosch R."/>
            <person name="Parkhill J."/>
            <person name="Garnier T."/>
            <person name="Churcher C.M."/>
            <person name="Harris D.E."/>
            <person name="Gordon S.V."/>
            <person name="Eiglmeier K."/>
            <person name="Gas S."/>
            <person name="Barry C.E. III"/>
            <person name="Tekaia F."/>
            <person name="Badcock K."/>
            <person name="Basham D."/>
            <person name="Brown D."/>
            <person name="Chillingworth T."/>
            <person name="Connor R."/>
            <person name="Davies R.M."/>
            <person name="Devlin K."/>
            <person name="Feltwell T."/>
            <person name="Gentles S."/>
            <person name="Hamlin N."/>
            <person name="Holroyd S."/>
            <person name="Hornsby T."/>
            <person name="Jagels K."/>
            <person name="Krogh A."/>
            <person name="McLean J."/>
            <person name="Moule S."/>
            <person name="Murphy L.D."/>
            <person name="Oliver S."/>
            <person name="Osborne J."/>
            <person name="Quail M.A."/>
            <person name="Rajandream M.A."/>
            <person name="Rogers J."/>
            <person name="Rutter S."/>
            <person name="Seeger K."/>
            <person name="Skelton S."/>
            <person name="Squares S."/>
            <person name="Squares R."/>
            <person name="Sulston J.E."/>
            <person name="Taylor K."/>
            <person name="Whitehead S."/>
            <person name="Barrell B.G."/>
        </authorList>
    </citation>
    <scope>NUCLEOTIDE SEQUENCE [LARGE SCALE GENOMIC DNA]</scope>
    <source>
        <strain>ATCC 25618 / H37Rv</strain>
    </source>
</reference>
<reference key="3">
    <citation type="journal article" date="2004" name="J. Biol. Chem.">
        <title>Molecular dissection of the role of two methyltransferases in the biosynthesis of phenolglycolipids and phthiocerol dimycoserosate in the Mycobacterium tuberculosis complex.</title>
        <authorList>
            <person name="Perez E."/>
            <person name="Constant P."/>
            <person name="Laval F."/>
            <person name="Lemassu A."/>
            <person name="Laneelle M.-A."/>
            <person name="Daffe M."/>
            <person name="Guilhot C."/>
        </authorList>
    </citation>
    <scope>FUNCTION AS METHYLTRANSFERASE</scope>
    <source>
        <strain>ATCC 25618 / H37Rv</strain>
    </source>
</reference>
<reference key="4">
    <citation type="journal article" date="2008" name="BMC Syst. Biol.">
        <title>targetTB: a target identification pipeline for Mycobacterium tuberculosis through an interactome, reactome and genome-scale structural analysis.</title>
        <authorList>
            <person name="Raman K."/>
            <person name="Yeturu K."/>
            <person name="Chandra N."/>
        </authorList>
    </citation>
    <scope>IDENTIFICATION AS A DRUG TARGET [LARGE SCALE ANALYSIS]</scope>
</reference>
<reference key="5">
    <citation type="journal article" date="2011" name="Mol. Cell. Proteomics">
        <title>Proteogenomic analysis of Mycobacterium tuberculosis by high resolution mass spectrometry.</title>
        <authorList>
            <person name="Kelkar D.S."/>
            <person name="Kumar D."/>
            <person name="Kumar P."/>
            <person name="Balakrishnan L."/>
            <person name="Muthusamy B."/>
            <person name="Yadav A.K."/>
            <person name="Shrivastava P."/>
            <person name="Marimuthu A."/>
            <person name="Anand S."/>
            <person name="Sundaram H."/>
            <person name="Kingsbury R."/>
            <person name="Harsha H.C."/>
            <person name="Nair B."/>
            <person name="Prasad T.S."/>
            <person name="Chauhan D.S."/>
            <person name="Katoch K."/>
            <person name="Katoch V.M."/>
            <person name="Kumar P."/>
            <person name="Chaerkady R."/>
            <person name="Ramachandran S."/>
            <person name="Dash D."/>
            <person name="Pandey A."/>
        </authorList>
    </citation>
    <scope>IDENTIFICATION BY MASS SPECTROMETRY [LARGE SCALE ANALYSIS]</scope>
    <source>
        <strain>ATCC 25618 / H37Rv</strain>
    </source>
</reference>
<name>PHMT_MYCTU</name>
<protein>
    <recommendedName>
        <fullName>Phthiotriol/phenolphthiotriol dimycocerosates methyltransferase</fullName>
        <ecNumber>2.1.1.-</ecNumber>
    </recommendedName>
</protein>
<proteinExistence type="evidence at protein level"/>
<feature type="chain" id="PRO_0000305165" description="Phthiotriol/phenolphthiotriol dimycocerosates methyltransferase">
    <location>
        <begin position="1"/>
        <end position="270"/>
    </location>
</feature>
<gene>
    <name type="ordered locus">Rv2952</name>
</gene>
<keyword id="KW-0444">Lipid biosynthesis</keyword>
<keyword id="KW-0443">Lipid metabolism</keyword>
<keyword id="KW-0489">Methyltransferase</keyword>
<keyword id="KW-1185">Reference proteome</keyword>
<keyword id="KW-0808">Transferase</keyword>
<accession>P9WIN3</accession>
<accession>L0TBC8</accession>
<accession>O08026</accession>
<accession>Q50464</accession>
<accession>Q798M4</accession>
<accession>Q7D6D5</accession>